<organism>
    <name type="scientific">Bacillus anthracis (strain CDC 684 / NRRL 3495)</name>
    <dbReference type="NCBI Taxonomy" id="568206"/>
    <lineage>
        <taxon>Bacteria</taxon>
        <taxon>Bacillati</taxon>
        <taxon>Bacillota</taxon>
        <taxon>Bacilli</taxon>
        <taxon>Bacillales</taxon>
        <taxon>Bacillaceae</taxon>
        <taxon>Bacillus</taxon>
        <taxon>Bacillus cereus group</taxon>
    </lineage>
</organism>
<reference key="1">
    <citation type="submission" date="2008-10" db="EMBL/GenBank/DDBJ databases">
        <title>Genome sequence of Bacillus anthracis str. CDC 684.</title>
        <authorList>
            <person name="Dodson R.J."/>
            <person name="Munk A.C."/>
            <person name="Brettin T."/>
            <person name="Bruce D."/>
            <person name="Detter C."/>
            <person name="Tapia R."/>
            <person name="Han C."/>
            <person name="Sutton G."/>
            <person name="Sims D."/>
        </authorList>
    </citation>
    <scope>NUCLEOTIDE SEQUENCE [LARGE SCALE GENOMIC DNA]</scope>
    <source>
        <strain>CDC 684 / NRRL 3495</strain>
    </source>
</reference>
<comment type="PTM">
    <text evidence="1">The N-terminus is cleaved by ribosomal processing cysteine protease Prp.</text>
</comment>
<comment type="similarity">
    <text evidence="2">Belongs to the bacterial ribosomal protein bL27 family.</text>
</comment>
<dbReference type="EMBL" id="CP001215">
    <property type="protein sequence ID" value="ACP16632.1"/>
    <property type="molecule type" value="Genomic_DNA"/>
</dbReference>
<dbReference type="RefSeq" id="WP_000944957.1">
    <property type="nucleotide sequence ID" value="NC_012581.1"/>
</dbReference>
<dbReference type="SMR" id="C3L6X4"/>
<dbReference type="GeneID" id="92884982"/>
<dbReference type="KEGG" id="bah:BAMEG_4709"/>
<dbReference type="HOGENOM" id="CLU_095424_4_0_9"/>
<dbReference type="GO" id="GO:0022625">
    <property type="term" value="C:cytosolic large ribosomal subunit"/>
    <property type="evidence" value="ECO:0007669"/>
    <property type="project" value="TreeGrafter"/>
</dbReference>
<dbReference type="GO" id="GO:0003735">
    <property type="term" value="F:structural constituent of ribosome"/>
    <property type="evidence" value="ECO:0007669"/>
    <property type="project" value="InterPro"/>
</dbReference>
<dbReference type="GO" id="GO:0006412">
    <property type="term" value="P:translation"/>
    <property type="evidence" value="ECO:0007669"/>
    <property type="project" value="UniProtKB-UniRule"/>
</dbReference>
<dbReference type="FunFam" id="2.40.50.100:FF:000004">
    <property type="entry name" value="50S ribosomal protein L27"/>
    <property type="match status" value="1"/>
</dbReference>
<dbReference type="Gene3D" id="2.40.50.100">
    <property type="match status" value="1"/>
</dbReference>
<dbReference type="HAMAP" id="MF_00539">
    <property type="entry name" value="Ribosomal_bL27"/>
    <property type="match status" value="1"/>
</dbReference>
<dbReference type="InterPro" id="IPR001684">
    <property type="entry name" value="Ribosomal_bL27"/>
</dbReference>
<dbReference type="InterPro" id="IPR018261">
    <property type="entry name" value="Ribosomal_bL27_CS"/>
</dbReference>
<dbReference type="NCBIfam" id="TIGR00062">
    <property type="entry name" value="L27"/>
    <property type="match status" value="1"/>
</dbReference>
<dbReference type="PANTHER" id="PTHR15893:SF0">
    <property type="entry name" value="LARGE RIBOSOMAL SUBUNIT PROTEIN BL27M"/>
    <property type="match status" value="1"/>
</dbReference>
<dbReference type="PANTHER" id="PTHR15893">
    <property type="entry name" value="RIBOSOMAL PROTEIN L27"/>
    <property type="match status" value="1"/>
</dbReference>
<dbReference type="Pfam" id="PF01016">
    <property type="entry name" value="Ribosomal_L27"/>
    <property type="match status" value="1"/>
</dbReference>
<dbReference type="PRINTS" id="PR00063">
    <property type="entry name" value="RIBOSOMALL27"/>
</dbReference>
<dbReference type="SUPFAM" id="SSF110324">
    <property type="entry name" value="Ribosomal L27 protein-like"/>
    <property type="match status" value="1"/>
</dbReference>
<dbReference type="PROSITE" id="PS00831">
    <property type="entry name" value="RIBOSOMAL_L27"/>
    <property type="match status" value="1"/>
</dbReference>
<evidence type="ECO:0000250" key="1">
    <source>
        <dbReference type="UniProtKB" id="Q2FXT0"/>
    </source>
</evidence>
<evidence type="ECO:0000255" key="2">
    <source>
        <dbReference type="HAMAP-Rule" id="MF_00539"/>
    </source>
</evidence>
<evidence type="ECO:0000256" key="3">
    <source>
        <dbReference type="SAM" id="MobiDB-lite"/>
    </source>
</evidence>
<evidence type="ECO:0000305" key="4"/>
<protein>
    <recommendedName>
        <fullName evidence="2">Large ribosomal subunit protein bL27</fullName>
    </recommendedName>
    <alternativeName>
        <fullName evidence="4">50S ribosomal protein L27</fullName>
    </alternativeName>
</protein>
<proteinExistence type="inferred from homology"/>
<feature type="propeptide" id="PRO_0000459849" evidence="1">
    <location>
        <begin position="1"/>
        <end position="9"/>
    </location>
</feature>
<feature type="chain" id="PRO_1000146506" description="Large ribosomal subunit protein bL27">
    <location>
        <begin position="10"/>
        <end position="96"/>
    </location>
</feature>
<feature type="region of interest" description="Disordered" evidence="3">
    <location>
        <begin position="14"/>
        <end position="36"/>
    </location>
</feature>
<keyword id="KW-0687">Ribonucleoprotein</keyword>
<keyword id="KW-0689">Ribosomal protein</keyword>
<accession>C3L6X4</accession>
<gene>
    <name evidence="2" type="primary">rpmA</name>
    <name type="ordered locus">BAMEG_4709</name>
</gene>
<name>RL27_BACAC</name>
<sequence>MLRLDLQFFASKKGVGSTKNGRDSQSKRLGAKRADGQTVSGGSILYRQRGTKIYPGVNVGRGGDDTLYAKVDGVVRFERLGRDRKQVSVYPVAQEA</sequence>